<reference key="1">
    <citation type="journal article" date="2004" name="Proc. Natl. Acad. Sci. U.S.A.">
        <title>Structural flexibility in the Burkholderia mallei genome.</title>
        <authorList>
            <person name="Nierman W.C."/>
            <person name="DeShazer D."/>
            <person name="Kim H.S."/>
            <person name="Tettelin H."/>
            <person name="Nelson K.E."/>
            <person name="Feldblyum T.V."/>
            <person name="Ulrich R.L."/>
            <person name="Ronning C.M."/>
            <person name="Brinkac L.M."/>
            <person name="Daugherty S.C."/>
            <person name="Davidsen T.D."/>
            <person name="DeBoy R.T."/>
            <person name="Dimitrov G."/>
            <person name="Dodson R.J."/>
            <person name="Durkin A.S."/>
            <person name="Gwinn M.L."/>
            <person name="Haft D.H."/>
            <person name="Khouri H.M."/>
            <person name="Kolonay J.F."/>
            <person name="Madupu R."/>
            <person name="Mohammoud Y."/>
            <person name="Nelson W.C."/>
            <person name="Radune D."/>
            <person name="Romero C.M."/>
            <person name="Sarria S."/>
            <person name="Selengut J."/>
            <person name="Shamblin C."/>
            <person name="Sullivan S.A."/>
            <person name="White O."/>
            <person name="Yu Y."/>
            <person name="Zafar N."/>
            <person name="Zhou L."/>
            <person name="Fraser C.M."/>
        </authorList>
    </citation>
    <scope>NUCLEOTIDE SEQUENCE [LARGE SCALE GENOMIC DNA]</scope>
    <source>
        <strain>ATCC 23344</strain>
    </source>
</reference>
<comment type="function">
    <text evidence="1">Binds to the 23S rRNA.</text>
</comment>
<comment type="subunit">
    <text evidence="1">Part of the 50S ribosomal subunit.</text>
</comment>
<comment type="similarity">
    <text evidence="1">Belongs to the universal ribosomal protein uL15 family.</text>
</comment>
<sequence>MELNNLKPAEGAKHAKRRVGRGIGSGLGKTAGRGHKGQKSRSGGFHKVGFEGGQMPLQRRLPKRGFTSLTKEFVGEVRLGDLEKLPVDEIDLLALKQAGLVGELIKSAKIIATGELKRKIVVKGLGATKGARAAIEAAGGSFAE</sequence>
<name>RL15_BURMA</name>
<keyword id="KW-1185">Reference proteome</keyword>
<keyword id="KW-0687">Ribonucleoprotein</keyword>
<keyword id="KW-0689">Ribosomal protein</keyword>
<keyword id="KW-0694">RNA-binding</keyword>
<keyword id="KW-0699">rRNA-binding</keyword>
<proteinExistence type="inferred from homology"/>
<dbReference type="EMBL" id="CP000010">
    <property type="protein sequence ID" value="AAU47851.1"/>
    <property type="molecule type" value="Genomic_DNA"/>
</dbReference>
<dbReference type="RefSeq" id="WP_004197941.1">
    <property type="nucleotide sequence ID" value="NC_006348.1"/>
</dbReference>
<dbReference type="RefSeq" id="YP_104147.1">
    <property type="nucleotide sequence ID" value="NC_006348.1"/>
</dbReference>
<dbReference type="SMR" id="Q62GM4"/>
<dbReference type="GeneID" id="92980300"/>
<dbReference type="KEGG" id="bma:BMA2613"/>
<dbReference type="PATRIC" id="fig|243160.12.peg.2684"/>
<dbReference type="eggNOG" id="COG0200">
    <property type="taxonomic scope" value="Bacteria"/>
</dbReference>
<dbReference type="HOGENOM" id="CLU_055188_4_2_4"/>
<dbReference type="Proteomes" id="UP000006693">
    <property type="component" value="Chromosome 1"/>
</dbReference>
<dbReference type="GO" id="GO:0022625">
    <property type="term" value="C:cytosolic large ribosomal subunit"/>
    <property type="evidence" value="ECO:0007669"/>
    <property type="project" value="TreeGrafter"/>
</dbReference>
<dbReference type="GO" id="GO:0019843">
    <property type="term" value="F:rRNA binding"/>
    <property type="evidence" value="ECO:0007669"/>
    <property type="project" value="UniProtKB-UniRule"/>
</dbReference>
<dbReference type="GO" id="GO:0003735">
    <property type="term" value="F:structural constituent of ribosome"/>
    <property type="evidence" value="ECO:0007669"/>
    <property type="project" value="InterPro"/>
</dbReference>
<dbReference type="GO" id="GO:0006412">
    <property type="term" value="P:translation"/>
    <property type="evidence" value="ECO:0007669"/>
    <property type="project" value="UniProtKB-UniRule"/>
</dbReference>
<dbReference type="Gene3D" id="3.100.10.10">
    <property type="match status" value="1"/>
</dbReference>
<dbReference type="HAMAP" id="MF_01341">
    <property type="entry name" value="Ribosomal_uL15"/>
    <property type="match status" value="1"/>
</dbReference>
<dbReference type="InterPro" id="IPR030878">
    <property type="entry name" value="Ribosomal_uL15"/>
</dbReference>
<dbReference type="InterPro" id="IPR021131">
    <property type="entry name" value="Ribosomal_uL15/eL18"/>
</dbReference>
<dbReference type="InterPro" id="IPR036227">
    <property type="entry name" value="Ribosomal_uL15/eL18_sf"/>
</dbReference>
<dbReference type="InterPro" id="IPR005749">
    <property type="entry name" value="Ribosomal_uL15_bac-type"/>
</dbReference>
<dbReference type="InterPro" id="IPR001196">
    <property type="entry name" value="Ribosomal_uL15_CS"/>
</dbReference>
<dbReference type="NCBIfam" id="TIGR01071">
    <property type="entry name" value="rplO_bact"/>
    <property type="match status" value="1"/>
</dbReference>
<dbReference type="PANTHER" id="PTHR12934">
    <property type="entry name" value="50S RIBOSOMAL PROTEIN L15"/>
    <property type="match status" value="1"/>
</dbReference>
<dbReference type="PANTHER" id="PTHR12934:SF11">
    <property type="entry name" value="LARGE RIBOSOMAL SUBUNIT PROTEIN UL15M"/>
    <property type="match status" value="1"/>
</dbReference>
<dbReference type="Pfam" id="PF00828">
    <property type="entry name" value="Ribosomal_L27A"/>
    <property type="match status" value="1"/>
</dbReference>
<dbReference type="SUPFAM" id="SSF52080">
    <property type="entry name" value="Ribosomal proteins L15p and L18e"/>
    <property type="match status" value="1"/>
</dbReference>
<dbReference type="PROSITE" id="PS00475">
    <property type="entry name" value="RIBOSOMAL_L15"/>
    <property type="match status" value="1"/>
</dbReference>
<gene>
    <name evidence="1" type="primary">rplO</name>
    <name type="ordered locus">BMA2613</name>
</gene>
<organism>
    <name type="scientific">Burkholderia mallei (strain ATCC 23344)</name>
    <dbReference type="NCBI Taxonomy" id="243160"/>
    <lineage>
        <taxon>Bacteria</taxon>
        <taxon>Pseudomonadati</taxon>
        <taxon>Pseudomonadota</taxon>
        <taxon>Betaproteobacteria</taxon>
        <taxon>Burkholderiales</taxon>
        <taxon>Burkholderiaceae</taxon>
        <taxon>Burkholderia</taxon>
        <taxon>pseudomallei group</taxon>
    </lineage>
</organism>
<evidence type="ECO:0000255" key="1">
    <source>
        <dbReference type="HAMAP-Rule" id="MF_01341"/>
    </source>
</evidence>
<evidence type="ECO:0000256" key="2">
    <source>
        <dbReference type="SAM" id="MobiDB-lite"/>
    </source>
</evidence>
<evidence type="ECO:0000305" key="3"/>
<accession>Q62GM4</accession>
<feature type="chain" id="PRO_0000104697" description="Large ribosomal subunit protein uL15">
    <location>
        <begin position="1"/>
        <end position="144"/>
    </location>
</feature>
<feature type="region of interest" description="Disordered" evidence="2">
    <location>
        <begin position="1"/>
        <end position="56"/>
    </location>
</feature>
<feature type="compositionally biased region" description="Gly residues" evidence="2">
    <location>
        <begin position="21"/>
        <end position="31"/>
    </location>
</feature>
<protein>
    <recommendedName>
        <fullName evidence="1">Large ribosomal subunit protein uL15</fullName>
    </recommendedName>
    <alternativeName>
        <fullName evidence="3">50S ribosomal protein L15</fullName>
    </alternativeName>
</protein>